<accession>B3A0H6</accession>
<proteinExistence type="evidence at protein level"/>
<keyword id="KW-0027">Amidation</keyword>
<keyword id="KW-0903">Direct protein sequencing</keyword>
<keyword id="KW-0527">Neuropeptide</keyword>
<keyword id="KW-0964">Secreted</keyword>
<comment type="function">
    <text evidence="1">FMRFamides and FMRFamide-like peptides are neuropeptides.</text>
</comment>
<comment type="subcellular location">
    <subcellularLocation>
        <location evidence="6">Secreted</location>
    </subcellularLocation>
</comment>
<comment type="similarity">
    <text evidence="2">Belongs to the FARP (FMRF amide related peptide) family.</text>
</comment>
<protein>
    <recommendedName>
        <fullName evidence="4">Extended FMRFamide-1</fullName>
        <shortName evidence="4">FMRFa-1</shortName>
    </recommendedName>
</protein>
<dbReference type="GO" id="GO:0005576">
    <property type="term" value="C:extracellular region"/>
    <property type="evidence" value="ECO:0007669"/>
    <property type="project" value="UniProtKB-SubCell"/>
</dbReference>
<dbReference type="GO" id="GO:0007218">
    <property type="term" value="P:neuropeptide signaling pathway"/>
    <property type="evidence" value="ECO:0007669"/>
    <property type="project" value="UniProtKB-KW"/>
</dbReference>
<evidence type="ECO:0000250" key="1">
    <source>
        <dbReference type="UniProtKB" id="P34405"/>
    </source>
</evidence>
<evidence type="ECO:0000255" key="2"/>
<evidence type="ECO:0000269" key="3">
    <source>
    </source>
</evidence>
<evidence type="ECO:0000303" key="4">
    <source>
    </source>
</evidence>
<evidence type="ECO:0000305" key="5"/>
<evidence type="ECO:0000305" key="6">
    <source>
    </source>
</evidence>
<organism>
    <name type="scientific">Tyrannophasma gladiator</name>
    <name type="common">Gladiator</name>
    <name type="synonym">Heel-walker</name>
    <dbReference type="NCBI Taxonomy" id="270861"/>
    <lineage>
        <taxon>Eukaryota</taxon>
        <taxon>Metazoa</taxon>
        <taxon>Ecdysozoa</taxon>
        <taxon>Arthropoda</taxon>
        <taxon>Hexapoda</taxon>
        <taxon>Insecta</taxon>
        <taxon>Pterygota</taxon>
        <taxon>Neoptera</taxon>
        <taxon>Polyneoptera</taxon>
        <taxon>Mantophasmatodea</taxon>
        <taxon>Mantophasmatodea incertae sedis</taxon>
        <taxon>Tyrannophasma</taxon>
    </lineage>
</organism>
<name>FAR1_TYRGL</name>
<sequence length="7" mass="820">AQSFVRL</sequence>
<feature type="peptide" id="PRO_0000421483" description="Extended FMRFamide-1" evidence="3">
    <location>
        <begin position="1"/>
        <end position="7"/>
    </location>
</feature>
<feature type="modified residue" description="Leucine amide" evidence="3">
    <location>
        <position position="7"/>
    </location>
</feature>
<feature type="unsure residue" description="L or I" evidence="3">
    <location>
        <position position="7"/>
    </location>
</feature>
<reference evidence="5" key="1">
    <citation type="journal article" date="2012" name="Syst. Biol.">
        <title>Peptidomics-based phylogeny and biogeography of Mantophasmatodea (Hexapoda).</title>
        <authorList>
            <person name="Predel R."/>
            <person name="Neupert S."/>
            <person name="Huetteroth W."/>
            <person name="Kahnt J."/>
            <person name="Waidelich D."/>
            <person name="Roth S."/>
        </authorList>
    </citation>
    <scope>PROTEIN SEQUENCE</scope>
    <scope>AMIDATION AT LEU-7</scope>
    <source>
        <tissue evidence="3">Thoracic perisympathetic organs</tissue>
    </source>
</reference>